<sequence>MEEILRKLQKEASGSKYKAIKESCTWALETLGGLDTIVKIPPHVLREKCLLPLQLALESKNVKLAQHALAGMQKLLSEERFVSMETDSDEKQLLNQILNAVKVTPSLNEDLQVEVMKVLLCITYTPTFDLNGSAVLKIAEVCIETYISSCHQRSINTAVRATLSQMLSDLTLQLRQRQENTIIENPDVPQDFGNQGSTVESLCDDVVSVLTVLCEKLQAAINDSQQLQLLYLECILSVLSSSSSSMHLHRRFTDLIWKNLCPALIVILGNPIHDKTITSAHTSSTSTSLESDSASPGVSDHGRGSGCSCTAPALSGPVARTIYYIAAELVRLVGSVDSMKPVLQSLYHRVLLYPPPQHRVEAIKIMKEILGSPQRLCDLAGPSSTESESRKRSISKRKSHLDLLKLIMDGMTEACIKGGIEACYAAVSCVCTLLGALDELSQGKGLSEGQVQLLLLRLEELKDGAEWSRDSMEINEADFRWQRRVLSSEHTPWESGNERSLDISISVTTDTGQTTLEGELGQTTPEDHSGNHKNSLKSPAIPEGKETLSKVLETEAVDQPDVVQRSHTVPYPDITNFLSVDCRTRSYGSRYSESNFSVDDQDLSRTEFDSCDQYSMAAEKDSGRSDVSDIGSDNCSLADEEQTPRDCLGHRSLRTAALSLKLLKNQEADQHSARLFIQSLEGLLPRLLSLSNVEEVDTALQNFASTFCSGMMHSPGFDGNSSLSFQMLMNADSLYTAAHCALLLNLKLSHGDYYRKRPTLAPGVMKDFMKQVQTSGVLMVFSQAWIEELYHQVLDRNMLGEAGYWGSPEDNSLPLITMLTDIDGLESSAIGGQLMASAATESPFAQSRRIDDSTVAGVAFARYILVGCWKNLIDTLSTPLTGRMAGSSKGLAFILGAEGIKEQNQKERDAICMSLDGLRKAARLSCALGVAANCASALAQMAAASCVQEEKEEREAQEPSDAITQVKLKVEQKLEQIGKVQGVWLHTAHVLCMEAILSVGLEMGSHNPDCWPHVFRVCEYVGTLEHNHFSDGASQPPLTISQPQKATGSAGLLGDPECEGSPPEHSPEQGRSLSTAPVVQPLSIQDLVREGSRGRASDFRGGSLMSGSSAAKVVLTLSTQADRLFEDATDKLNLMALGGFLYQLKKASQSQLFHSVTDTVDYSLAMPGEVKSTQDRKSALHLFRLGNAMLRIVRSKARPLLHVMRCWSLVAPHLVEAACHKERHVSQKAVSFIHDILTEVLTDWNEPPHFHFNEALFRPFERIMQLELCDEDVQDQVVTSIGELVEVCSTQIQSGWRPLFSALETVHGGNKSEMKEYLVGDYSMGKGQAPVFDVFEAFLNTDNIQVFANAATSYIMCLMKFVKGLGEVDCKEIGDCAPAPGAPSTDLCLPALDYLRRCSQLLAKIYKMPLKPIFLSGRLAGLPRRLQEQSASSEDGIESVLSDFDDDTGLIEVWIILLEQLTAAVSNCPRQHQPPTLDLLFELLRDVTKTPGPGFGIYAVVHLLLPVMSVWLRRSHKDHSYWDMASANFKHAIGLSCELVVEHIQSFLHSDIRYESMINTMLKDLFELLVACVAKPTETISRVGCSCIRYVLVTAGPVFTEEMWRLACCALQDAFSATLKPVKDLLGCFHSGTESFSGEGCQVRVAAPSSSPSAEAEYWRIRAMAQQVFMLDTQCSPKTPNNFDHAQSCQLIIELPPDEKPNGHTKKSVSFREIVVSLLSHQVLLQNLYDILLEEFVKGPSPGEEKTIQVPEAKLAGFLRYISMQNLAVIFDLLLDSYRTAREFDTSPGLKCLLKKVSGIGGAANLYRQSAMSFNIYFHALVCAVLTNQETITAEQVKKVLFEDDERSTDSSQQCSSEDEDIFEETAQVSPPRGKEKRQWRARMPLLSVQPVSNADWVWLVKRLHKLCMELCNNYIQMHLDLENCMEEPPIFKGDPFFILPSFQSESSTPSTGGFSGKETPSEDDRSQSREHMGESLSLKAGGGDLLLPPSPKVEKKDPSRKKEWWENAGNKIYTMAADKTISKLMTEYKKRKQQHNLSAFPKEVKVEKKGEPLGPRGQDSPLLQRPQHLMDQGQMRHSFSAGPELLRQDKRPRSGSTGSSLSVSVRDAEAQIQAWTNMVLTVLNQIQILPDQTFTALQPAVFPCISQLTCHVTDIRVRQAVREWLGRVGRVYDIIV</sequence>
<organism>
    <name type="scientific">Homo sapiens</name>
    <name type="common">Human</name>
    <dbReference type="NCBI Taxonomy" id="9606"/>
    <lineage>
        <taxon>Eukaryota</taxon>
        <taxon>Metazoa</taxon>
        <taxon>Chordata</taxon>
        <taxon>Craniata</taxon>
        <taxon>Vertebrata</taxon>
        <taxon>Euteleostomi</taxon>
        <taxon>Mammalia</taxon>
        <taxon>Eutheria</taxon>
        <taxon>Euarchontoglires</taxon>
        <taxon>Primates</taxon>
        <taxon>Haplorrhini</taxon>
        <taxon>Catarrhini</taxon>
        <taxon>Hominidae</taxon>
        <taxon>Homo</taxon>
    </lineage>
</organism>
<name>BIG3_HUMAN</name>
<comment type="function">
    <text evidence="1 4">Participates in the regulation of systemic glucose homeostasis, where it negatively regulates insulin granule biogenesis in pancreatic islet beta cells (By similarity). Also regulates glucagon granule production in pancreatic alpha cells (By similarity). Inhibits nuclear translocation of the transcriptional coregulator PHB2 and may enhance estrogen receptor alpha (ESR1) transcriptional activity in breast cancer cells (PubMed:19496786).</text>
</comment>
<comment type="subunit">
    <text evidence="4">Interacts with PHB2.</text>
</comment>
<comment type="subcellular location">
    <subcellularLocation>
        <location evidence="4">Cytoplasm</location>
    </subcellularLocation>
    <subcellularLocation>
        <location evidence="1">Cytoplasmic vesicle</location>
        <location evidence="1">Secretory vesicle</location>
    </subcellularLocation>
    <subcellularLocation>
        <location evidence="5">Cytoplasmic vesicle</location>
        <location evidence="5">Secretory vesicle membrane</location>
        <topology evidence="5">Single-pass membrane protein</topology>
    </subcellularLocation>
</comment>
<comment type="tissue specificity">
    <text evidence="4">Expressed in breast cancer cell lines. Not expressed in normal tissues such as duct, mammary gland, lung, heart, liver, kidnay, bone marrow.</text>
</comment>
<proteinExistence type="evidence at protein level"/>
<keyword id="KW-0963">Cytoplasm</keyword>
<keyword id="KW-0968">Cytoplasmic vesicle</keyword>
<keyword id="KW-0344">Guanine-nucleotide releasing factor</keyword>
<keyword id="KW-0472">Membrane</keyword>
<keyword id="KW-0597">Phosphoprotein</keyword>
<keyword id="KW-1267">Proteomics identification</keyword>
<keyword id="KW-1185">Reference proteome</keyword>
<keyword id="KW-0812">Transmembrane</keyword>
<keyword id="KW-1133">Transmembrane helix</keyword>
<reference key="1">
    <citation type="journal article" date="2009" name="Cancer Sci.">
        <title>Activation of an estrogen/estrogen receptor signaling by BIG3 through its inhibitory effect on nuclear transport of PHB2/REA in breast cancer.</title>
        <authorList>
            <person name="Kim J.W."/>
            <person name="Akiyama M."/>
            <person name="Park J.H."/>
            <person name="Lin M.L."/>
            <person name="Shimo A."/>
            <person name="Ueki T."/>
            <person name="Daigo Y."/>
            <person name="Tsunoda T."/>
            <person name="Nishidate T."/>
            <person name="Nakamura Y."/>
            <person name="Katagiri T."/>
        </authorList>
    </citation>
    <scope>NUCLEOTIDE SEQUENCE [MRNA]</scope>
    <scope>FUNCTION</scope>
    <scope>INTERACTION WITH PHB2</scope>
    <scope>SUBCELLULAR LOCATION</scope>
    <scope>TISSUE SPECIFICITY</scope>
    <source>
        <tissue evidence="6">Mammary cancer</tissue>
    </source>
</reference>
<reference key="2">
    <citation type="journal article" date="2003" name="Nature">
        <title>The DNA sequence and analysis of human chromosome 6.</title>
        <authorList>
            <person name="Mungall A.J."/>
            <person name="Palmer S.A."/>
            <person name="Sims S.K."/>
            <person name="Edwards C.A."/>
            <person name="Ashurst J.L."/>
            <person name="Wilming L."/>
            <person name="Jones M.C."/>
            <person name="Horton R."/>
            <person name="Hunt S.E."/>
            <person name="Scott C.E."/>
            <person name="Gilbert J.G.R."/>
            <person name="Clamp M.E."/>
            <person name="Bethel G."/>
            <person name="Milne S."/>
            <person name="Ainscough R."/>
            <person name="Almeida J.P."/>
            <person name="Ambrose K.D."/>
            <person name="Andrews T.D."/>
            <person name="Ashwell R.I.S."/>
            <person name="Babbage A.K."/>
            <person name="Bagguley C.L."/>
            <person name="Bailey J."/>
            <person name="Banerjee R."/>
            <person name="Barker D.J."/>
            <person name="Barlow K.F."/>
            <person name="Bates K."/>
            <person name="Beare D.M."/>
            <person name="Beasley H."/>
            <person name="Beasley O."/>
            <person name="Bird C.P."/>
            <person name="Blakey S.E."/>
            <person name="Bray-Allen S."/>
            <person name="Brook J."/>
            <person name="Brown A.J."/>
            <person name="Brown J.Y."/>
            <person name="Burford D.C."/>
            <person name="Burrill W."/>
            <person name="Burton J."/>
            <person name="Carder C."/>
            <person name="Carter N.P."/>
            <person name="Chapman J.C."/>
            <person name="Clark S.Y."/>
            <person name="Clark G."/>
            <person name="Clee C.M."/>
            <person name="Clegg S."/>
            <person name="Cobley V."/>
            <person name="Collier R.E."/>
            <person name="Collins J.E."/>
            <person name="Colman L.K."/>
            <person name="Corby N.R."/>
            <person name="Coville G.J."/>
            <person name="Culley K.M."/>
            <person name="Dhami P."/>
            <person name="Davies J."/>
            <person name="Dunn M."/>
            <person name="Earthrowl M.E."/>
            <person name="Ellington A.E."/>
            <person name="Evans K.A."/>
            <person name="Faulkner L."/>
            <person name="Francis M.D."/>
            <person name="Frankish A."/>
            <person name="Frankland J."/>
            <person name="French L."/>
            <person name="Garner P."/>
            <person name="Garnett J."/>
            <person name="Ghori M.J."/>
            <person name="Gilby L.M."/>
            <person name="Gillson C.J."/>
            <person name="Glithero R.J."/>
            <person name="Grafham D.V."/>
            <person name="Grant M."/>
            <person name="Gribble S."/>
            <person name="Griffiths C."/>
            <person name="Griffiths M.N.D."/>
            <person name="Hall R."/>
            <person name="Halls K.S."/>
            <person name="Hammond S."/>
            <person name="Harley J.L."/>
            <person name="Hart E.A."/>
            <person name="Heath P.D."/>
            <person name="Heathcott R."/>
            <person name="Holmes S.J."/>
            <person name="Howden P.J."/>
            <person name="Howe K.L."/>
            <person name="Howell G.R."/>
            <person name="Huckle E."/>
            <person name="Humphray S.J."/>
            <person name="Humphries M.D."/>
            <person name="Hunt A.R."/>
            <person name="Johnson C.M."/>
            <person name="Joy A.A."/>
            <person name="Kay M."/>
            <person name="Keenan S.J."/>
            <person name="Kimberley A.M."/>
            <person name="King A."/>
            <person name="Laird G.K."/>
            <person name="Langford C."/>
            <person name="Lawlor S."/>
            <person name="Leongamornlert D.A."/>
            <person name="Leversha M."/>
            <person name="Lloyd C.R."/>
            <person name="Lloyd D.M."/>
            <person name="Loveland J.E."/>
            <person name="Lovell J."/>
            <person name="Martin S."/>
            <person name="Mashreghi-Mohammadi M."/>
            <person name="Maslen G.L."/>
            <person name="Matthews L."/>
            <person name="McCann O.T."/>
            <person name="McLaren S.J."/>
            <person name="McLay K."/>
            <person name="McMurray A."/>
            <person name="Moore M.J.F."/>
            <person name="Mullikin J.C."/>
            <person name="Niblett D."/>
            <person name="Nickerson T."/>
            <person name="Novik K.L."/>
            <person name="Oliver K."/>
            <person name="Overton-Larty E.K."/>
            <person name="Parker A."/>
            <person name="Patel R."/>
            <person name="Pearce A.V."/>
            <person name="Peck A.I."/>
            <person name="Phillimore B.J.C.T."/>
            <person name="Phillips S."/>
            <person name="Plumb R.W."/>
            <person name="Porter K.M."/>
            <person name="Ramsey Y."/>
            <person name="Ranby S.A."/>
            <person name="Rice C.M."/>
            <person name="Ross M.T."/>
            <person name="Searle S.M."/>
            <person name="Sehra H.K."/>
            <person name="Sheridan E."/>
            <person name="Skuce C.D."/>
            <person name="Smith S."/>
            <person name="Smith M."/>
            <person name="Spraggon L."/>
            <person name="Squares S.L."/>
            <person name="Steward C.A."/>
            <person name="Sycamore N."/>
            <person name="Tamlyn-Hall G."/>
            <person name="Tester J."/>
            <person name="Theaker A.J."/>
            <person name="Thomas D.W."/>
            <person name="Thorpe A."/>
            <person name="Tracey A."/>
            <person name="Tromans A."/>
            <person name="Tubby B."/>
            <person name="Wall M."/>
            <person name="Wallis J.M."/>
            <person name="West A.P."/>
            <person name="White S.S."/>
            <person name="Whitehead S.L."/>
            <person name="Whittaker H."/>
            <person name="Wild A."/>
            <person name="Willey D.J."/>
            <person name="Wilmer T.E."/>
            <person name="Wood J.M."/>
            <person name="Wray P.W."/>
            <person name="Wyatt J.C."/>
            <person name="Young L."/>
            <person name="Younger R.M."/>
            <person name="Bentley D.R."/>
            <person name="Coulson A."/>
            <person name="Durbin R.M."/>
            <person name="Hubbard T."/>
            <person name="Sulston J.E."/>
            <person name="Dunham I."/>
            <person name="Rogers J."/>
            <person name="Beck S."/>
        </authorList>
    </citation>
    <scope>NUCLEOTIDE SEQUENCE [LARGE SCALE GENOMIC DNA]</scope>
</reference>
<reference key="3">
    <citation type="journal article" date="1999" name="DNA Res.">
        <title>Prediction of the coding sequences of unidentified human genes. XV. The complete sequences of 100 new cDNA clones from brain which code for large proteins in vitro.</title>
        <authorList>
            <person name="Nagase T."/>
            <person name="Ishikawa K."/>
            <person name="Kikuno R."/>
            <person name="Hirosawa M."/>
            <person name="Nomura N."/>
            <person name="Ohara O."/>
        </authorList>
    </citation>
    <scope>NUCLEOTIDE SEQUENCE [LARGE SCALE MRNA] OF 306-2177</scope>
    <source>
        <tissue>Brain</tissue>
    </source>
</reference>
<reference key="4">
    <citation type="journal article" date="2002" name="DNA Res.">
        <title>Construction of expression-ready cDNA clones for KIAA genes: manual curation of 330 KIAA cDNA clones.</title>
        <authorList>
            <person name="Nakajima D."/>
            <person name="Okazaki N."/>
            <person name="Yamakawa H."/>
            <person name="Kikuno R."/>
            <person name="Ohara O."/>
            <person name="Nagase T."/>
        </authorList>
    </citation>
    <scope>SEQUENCE REVISION</scope>
</reference>
<reference key="5">
    <citation type="submission" date="2001-08" db="EMBL/GenBank/DDBJ databases">
        <title>KIAA1244 as a novel distantly related member (BIG3) of the BIG1/Sec7p subfamily of ARF GEFs.</title>
        <authorList>
            <person name="Hong W."/>
        </authorList>
    </citation>
    <scope>NUCLEOTIDE SEQUENCE [MRNA] OF 408-2177</scope>
</reference>
<reference key="6">
    <citation type="journal article" date="2004" name="Genome Res.">
        <title>The status, quality, and expansion of the NIH full-length cDNA project: the Mammalian Gene Collection (MGC).</title>
        <authorList>
            <consortium name="The MGC Project Team"/>
        </authorList>
    </citation>
    <scope>NUCLEOTIDE SEQUENCE [LARGE SCALE MRNA] OF 1588-2177</scope>
    <source>
        <tissue>Colon</tissue>
    </source>
</reference>
<reference key="7">
    <citation type="journal article" date="2008" name="Mol. Cell">
        <title>Kinase-selective enrichment enables quantitative phosphoproteomics of the kinome across the cell cycle.</title>
        <authorList>
            <person name="Daub H."/>
            <person name="Olsen J.V."/>
            <person name="Bairlein M."/>
            <person name="Gnad F."/>
            <person name="Oppermann F.S."/>
            <person name="Korner R."/>
            <person name="Greff Z."/>
            <person name="Keri G."/>
            <person name="Stemmann O."/>
            <person name="Mann M."/>
        </authorList>
    </citation>
    <scope>IDENTIFICATION BY MASS SPECTROMETRY [LARGE SCALE ANALYSIS]</scope>
    <source>
        <tissue>Cervix carcinoma</tissue>
    </source>
</reference>
<reference key="8">
    <citation type="journal article" date="2011" name="BMC Syst. Biol.">
        <title>Initial characterization of the human central proteome.</title>
        <authorList>
            <person name="Burkard T.R."/>
            <person name="Planyavsky M."/>
            <person name="Kaupe I."/>
            <person name="Breitwieser F.P."/>
            <person name="Buerckstuemmer T."/>
            <person name="Bennett K.L."/>
            <person name="Superti-Furga G."/>
            <person name="Colinge J."/>
        </authorList>
    </citation>
    <scope>IDENTIFICATION BY MASS SPECTROMETRY [LARGE SCALE ANALYSIS]</scope>
</reference>
<reference key="9">
    <citation type="journal article" date="2011" name="Sci. Signal.">
        <title>System-wide temporal characterization of the proteome and phosphoproteome of human embryonic stem cell differentiation.</title>
        <authorList>
            <person name="Rigbolt K.T."/>
            <person name="Prokhorova T.A."/>
            <person name="Akimov V."/>
            <person name="Henningsen J."/>
            <person name="Johansen P.T."/>
            <person name="Kratchmarova I."/>
            <person name="Kassem M."/>
            <person name="Mann M."/>
            <person name="Olsen J.V."/>
            <person name="Blagoev B."/>
        </authorList>
    </citation>
    <scope>IDENTIFICATION BY MASS SPECTROMETRY [LARGE SCALE ANALYSIS]</scope>
</reference>
<reference key="10">
    <citation type="journal article" date="2013" name="J. Proteome Res.">
        <title>Toward a comprehensive characterization of a human cancer cell phosphoproteome.</title>
        <authorList>
            <person name="Zhou H."/>
            <person name="Di Palma S."/>
            <person name="Preisinger C."/>
            <person name="Peng M."/>
            <person name="Polat A.N."/>
            <person name="Heck A.J."/>
            <person name="Mohammed S."/>
        </authorList>
    </citation>
    <scope>PHOSPHORYLATION [LARGE SCALE ANALYSIS] AT SER-1991</scope>
    <scope>IDENTIFICATION BY MASS SPECTROMETRY [LARGE SCALE ANALYSIS]</scope>
    <source>
        <tissue>Cervix carcinoma</tissue>
    </source>
</reference>
<dbReference type="EMBL" id="AB252196">
    <property type="protein sequence ID" value="BAH83562.1"/>
    <property type="molecule type" value="mRNA"/>
</dbReference>
<dbReference type="EMBL" id="AL031433">
    <property type="status" value="NOT_ANNOTATED_CDS"/>
    <property type="molecule type" value="Genomic_DNA"/>
</dbReference>
<dbReference type="EMBL" id="AL391240">
    <property type="status" value="NOT_ANNOTATED_CDS"/>
    <property type="molecule type" value="Genomic_DNA"/>
</dbReference>
<dbReference type="EMBL" id="AL031003">
    <property type="status" value="NOT_ANNOTATED_CDS"/>
    <property type="molecule type" value="Genomic_DNA"/>
</dbReference>
<dbReference type="EMBL" id="AB033070">
    <property type="protein sequence ID" value="BAA86558.2"/>
    <property type="molecule type" value="mRNA"/>
</dbReference>
<dbReference type="EMBL" id="AF413080">
    <property type="protein sequence ID" value="AAL04174.1"/>
    <property type="molecule type" value="mRNA"/>
</dbReference>
<dbReference type="EMBL" id="BC014227">
    <property type="protein sequence ID" value="AAH14227.2"/>
    <property type="molecule type" value="mRNA"/>
</dbReference>
<dbReference type="EMBL" id="BC033191">
    <property type="protein sequence ID" value="AAH33191.1"/>
    <property type="molecule type" value="mRNA"/>
</dbReference>
<dbReference type="CCDS" id="CCDS5189.2"/>
<dbReference type="RefSeq" id="NP_065073.3">
    <property type="nucleotide sequence ID" value="NM_020340.4"/>
</dbReference>
<dbReference type="BioGRID" id="121457">
    <property type="interactions" value="86"/>
</dbReference>
<dbReference type="FunCoup" id="Q5TH69">
    <property type="interactions" value="1001"/>
</dbReference>
<dbReference type="IntAct" id="Q5TH69">
    <property type="interactions" value="32"/>
</dbReference>
<dbReference type="MINT" id="Q5TH69"/>
<dbReference type="STRING" id="9606.ENSP00000251691"/>
<dbReference type="GlyGen" id="Q5TH69">
    <property type="glycosylation" value="2 sites, 1 O-linked glycan (1 site)"/>
</dbReference>
<dbReference type="iPTMnet" id="Q5TH69"/>
<dbReference type="PhosphoSitePlus" id="Q5TH69"/>
<dbReference type="SwissPalm" id="Q5TH69"/>
<dbReference type="BioMuta" id="ARFGEF3"/>
<dbReference type="DMDM" id="147742985"/>
<dbReference type="jPOST" id="Q5TH69"/>
<dbReference type="MassIVE" id="Q5TH69"/>
<dbReference type="PaxDb" id="9606-ENSP00000251691"/>
<dbReference type="PeptideAtlas" id="Q5TH69"/>
<dbReference type="ProteomicsDB" id="65144"/>
<dbReference type="Pumba" id="Q5TH69"/>
<dbReference type="Antibodypedia" id="52580">
    <property type="antibodies" value="8 antibodies from 6 providers"/>
</dbReference>
<dbReference type="DNASU" id="57221"/>
<dbReference type="Ensembl" id="ENST00000251691.5">
    <property type="protein sequence ID" value="ENSP00000251691.4"/>
    <property type="gene ID" value="ENSG00000112379.9"/>
</dbReference>
<dbReference type="GeneID" id="57221"/>
<dbReference type="KEGG" id="hsa:57221"/>
<dbReference type="MANE-Select" id="ENST00000251691.5">
    <property type="protein sequence ID" value="ENSP00000251691.4"/>
    <property type="RefSeq nucleotide sequence ID" value="NM_020340.5"/>
    <property type="RefSeq protein sequence ID" value="NP_065073.3"/>
</dbReference>
<dbReference type="UCSC" id="uc003qhu.4">
    <property type="organism name" value="human"/>
</dbReference>
<dbReference type="AGR" id="HGNC:21213"/>
<dbReference type="CTD" id="57221"/>
<dbReference type="DisGeNET" id="57221"/>
<dbReference type="GeneCards" id="ARFGEF3"/>
<dbReference type="HGNC" id="HGNC:21213">
    <property type="gene designation" value="ARFGEF3"/>
</dbReference>
<dbReference type="HPA" id="ENSG00000112379">
    <property type="expression patterns" value="Tissue enhanced (brain, salivary gland)"/>
</dbReference>
<dbReference type="MalaCards" id="ARFGEF3"/>
<dbReference type="MIM" id="617411">
    <property type="type" value="gene"/>
</dbReference>
<dbReference type="neXtProt" id="NX_Q5TH69"/>
<dbReference type="OpenTargets" id="ENSG00000112379"/>
<dbReference type="PharmGKB" id="PA134888863"/>
<dbReference type="VEuPathDB" id="HostDB:ENSG00000112379"/>
<dbReference type="eggNOG" id="KOG1846">
    <property type="taxonomic scope" value="Eukaryota"/>
</dbReference>
<dbReference type="GeneTree" id="ENSGT00530000064150"/>
<dbReference type="HOGENOM" id="CLU_000867_1_0_1"/>
<dbReference type="InParanoid" id="Q5TH69"/>
<dbReference type="OMA" id="CRNNPFD"/>
<dbReference type="OrthoDB" id="10002886at2759"/>
<dbReference type="PAN-GO" id="Q5TH69">
    <property type="GO annotations" value="1 GO annotation based on evolutionary models"/>
</dbReference>
<dbReference type="PhylomeDB" id="Q5TH69"/>
<dbReference type="TreeFam" id="TF300714"/>
<dbReference type="PathwayCommons" id="Q5TH69"/>
<dbReference type="SignaLink" id="Q5TH69"/>
<dbReference type="BioGRID-ORCS" id="57221">
    <property type="hits" value="8 hits in 1152 CRISPR screens"/>
</dbReference>
<dbReference type="ChiTaRS" id="ARFGEF3">
    <property type="organism name" value="human"/>
</dbReference>
<dbReference type="GenomeRNAi" id="57221"/>
<dbReference type="Pharos" id="Q5TH69">
    <property type="development level" value="Tdark"/>
</dbReference>
<dbReference type="PRO" id="PR:Q5TH69"/>
<dbReference type="Proteomes" id="UP000005640">
    <property type="component" value="Chromosome 6"/>
</dbReference>
<dbReference type="RNAct" id="Q5TH69">
    <property type="molecule type" value="protein"/>
</dbReference>
<dbReference type="Bgee" id="ENSG00000112379">
    <property type="expression patterns" value="Expressed in parotid gland and 165 other cell types or tissues"/>
</dbReference>
<dbReference type="GO" id="GO:0030658">
    <property type="term" value="C:transport vesicle membrane"/>
    <property type="evidence" value="ECO:0007669"/>
    <property type="project" value="UniProtKB-SubCell"/>
</dbReference>
<dbReference type="GO" id="GO:0005085">
    <property type="term" value="F:guanyl-nucleotide exchange factor activity"/>
    <property type="evidence" value="ECO:0007669"/>
    <property type="project" value="UniProtKB-KW"/>
</dbReference>
<dbReference type="GO" id="GO:0032012">
    <property type="term" value="P:regulation of ARF protein signal transduction"/>
    <property type="evidence" value="ECO:0007669"/>
    <property type="project" value="InterPro"/>
</dbReference>
<dbReference type="CDD" id="cd00171">
    <property type="entry name" value="Sec7"/>
    <property type="match status" value="1"/>
</dbReference>
<dbReference type="InterPro" id="IPR016024">
    <property type="entry name" value="ARM-type_fold"/>
</dbReference>
<dbReference type="InterPro" id="IPR032629">
    <property type="entry name" value="DCB_dom"/>
</dbReference>
<dbReference type="InterPro" id="IPR015403">
    <property type="entry name" value="Mon2/Sec7/BIG1-like_HDS"/>
</dbReference>
<dbReference type="InterPro" id="IPR046455">
    <property type="entry name" value="Sec7/BIG1-like_C"/>
</dbReference>
<dbReference type="InterPro" id="IPR000904">
    <property type="entry name" value="Sec7_dom"/>
</dbReference>
<dbReference type="PANTHER" id="PTHR10663:SF344">
    <property type="entry name" value="BREFELDIN A-INHIBITED GUANINE NUCLEOTIDE-EXCHANGE PROTEIN 3"/>
    <property type="match status" value="1"/>
</dbReference>
<dbReference type="PANTHER" id="PTHR10663">
    <property type="entry name" value="GUANYL-NUCLEOTIDE EXCHANGE FACTOR"/>
    <property type="match status" value="1"/>
</dbReference>
<dbReference type="Pfam" id="PF20252">
    <property type="entry name" value="BIG2_C"/>
    <property type="match status" value="1"/>
</dbReference>
<dbReference type="Pfam" id="PF16213">
    <property type="entry name" value="DCB"/>
    <property type="match status" value="1"/>
</dbReference>
<dbReference type="Pfam" id="PF09324">
    <property type="entry name" value="Sec7-like_HDS"/>
    <property type="match status" value="1"/>
</dbReference>
<dbReference type="SMART" id="SM00222">
    <property type="entry name" value="Sec7"/>
    <property type="match status" value="1"/>
</dbReference>
<dbReference type="SUPFAM" id="SSF48371">
    <property type="entry name" value="ARM repeat"/>
    <property type="match status" value="1"/>
</dbReference>
<accession>Q5TH69</accession>
<accession>C5NM88</accession>
<accession>Q76MU8</accession>
<accession>Q8N4Y4</accession>
<accession>Q96CH9</accession>
<accession>Q96P46</accession>
<accession>Q9ULH6</accession>
<feature type="chain" id="PRO_0000286671" description="Brefeldin A-inhibited guanine nucleotide-exchange protein 3">
    <location>
        <begin position="1"/>
        <end position="2177"/>
    </location>
</feature>
<feature type="transmembrane region" description="Helical" evidence="2">
    <location>
        <begin position="1492"/>
        <end position="1512"/>
    </location>
</feature>
<feature type="domain" description="SEC7">
    <location>
        <begin position="583"/>
        <end position="796"/>
    </location>
</feature>
<feature type="region of interest" description="Disordered" evidence="3">
    <location>
        <begin position="282"/>
        <end position="301"/>
    </location>
</feature>
<feature type="region of interest" description="Disordered" evidence="3">
    <location>
        <begin position="511"/>
        <end position="542"/>
    </location>
</feature>
<feature type="region of interest" description="Disordered" evidence="3">
    <location>
        <begin position="617"/>
        <end position="636"/>
    </location>
</feature>
<feature type="region of interest" description="Disordered" evidence="3">
    <location>
        <begin position="1031"/>
        <end position="1076"/>
    </location>
</feature>
<feature type="region of interest" description="Disordered" evidence="3">
    <location>
        <begin position="1848"/>
        <end position="1877"/>
    </location>
</feature>
<feature type="region of interest" description="Disordered" evidence="3">
    <location>
        <begin position="1946"/>
        <end position="2004"/>
    </location>
</feature>
<feature type="region of interest" description="Disordered" evidence="3">
    <location>
        <begin position="2033"/>
        <end position="2064"/>
    </location>
</feature>
<feature type="region of interest" description="Disordered" evidence="3">
    <location>
        <begin position="2082"/>
        <end position="2103"/>
    </location>
</feature>
<feature type="compositionally biased region" description="Low complexity" evidence="3">
    <location>
        <begin position="282"/>
        <end position="295"/>
    </location>
</feature>
<feature type="compositionally biased region" description="Polar residues" evidence="3">
    <location>
        <begin position="511"/>
        <end position="524"/>
    </location>
</feature>
<feature type="compositionally biased region" description="Basic and acidic residues" evidence="3">
    <location>
        <begin position="618"/>
        <end position="627"/>
    </location>
</feature>
<feature type="compositionally biased region" description="Polar residues" evidence="3">
    <location>
        <begin position="1032"/>
        <end position="1047"/>
    </location>
</feature>
<feature type="compositionally biased region" description="Basic and acidic residues" evidence="3">
    <location>
        <begin position="1960"/>
        <end position="1974"/>
    </location>
</feature>
<feature type="compositionally biased region" description="Basic and acidic residues" evidence="3">
    <location>
        <begin position="1993"/>
        <end position="2004"/>
    </location>
</feature>
<feature type="compositionally biased region" description="Basic and acidic residues" evidence="3">
    <location>
        <begin position="2043"/>
        <end position="2052"/>
    </location>
</feature>
<feature type="modified residue" description="Phosphoserine" evidence="1">
    <location>
        <position position="471"/>
    </location>
</feature>
<feature type="modified residue" description="Phosphoserine" evidence="1">
    <location>
        <position position="632"/>
    </location>
</feature>
<feature type="modified residue" description="Phosphoserine" evidence="1">
    <location>
        <position position="636"/>
    </location>
</feature>
<feature type="modified residue" description="Phosphoserine" evidence="1">
    <location>
        <position position="1049"/>
    </location>
</feature>
<feature type="modified residue" description="Phosphoserine" evidence="8">
    <location>
        <position position="1991"/>
    </location>
</feature>
<feature type="modified residue" description="Phosphoserine" evidence="1">
    <location>
        <position position="2079"/>
    </location>
</feature>
<feature type="modified residue" description="Phosphoserine" evidence="1">
    <location>
        <position position="2081"/>
    </location>
</feature>
<feature type="modified residue" description="Phosphoserine" evidence="1">
    <location>
        <position position="2095"/>
    </location>
</feature>
<feature type="modified residue" description="Phosphoserine" evidence="1">
    <location>
        <position position="2101"/>
    </location>
</feature>
<feature type="modified residue" description="Phosphoserine" evidence="1">
    <location>
        <position position="2103"/>
    </location>
</feature>
<feature type="sequence variant" id="VAR_051925" description="In dbSNP:rs9376338.">
    <original>E</original>
    <variation>D</variation>
    <location>
        <position position="413"/>
    </location>
</feature>
<feature type="sequence variant" id="VAR_032154" description="In dbSNP:rs7764091.">
    <original>S</original>
    <variation>A</variation>
    <location>
        <position position="689"/>
    </location>
</feature>
<feature type="sequence variant" id="VAR_032155" description="In dbSNP:rs3736706.">
    <original>A</original>
    <variation>T</variation>
    <location>
        <position position="1571"/>
    </location>
</feature>
<feature type="sequence variant" id="VAR_032156" description="In dbSNP:rs35964895.">
    <original>K</original>
    <variation>R</variation>
    <location>
        <position position="2031"/>
    </location>
</feature>
<feature type="sequence conflict" description="In Ref. 6; AAH14227/AAH33191." evidence="5" ref="6">
    <location>
        <position position="1876"/>
    </location>
</feature>
<feature type="sequence conflict" description="In Ref. 6; AAH14227/AAH33191." evidence="5" ref="6">
    <original>R</original>
    <variation>L</variation>
    <location>
        <position position="1883"/>
    </location>
</feature>
<protein>
    <recommendedName>
        <fullName evidence="5">Brefeldin A-inhibited guanine nucleotide-exchange protein 3</fullName>
    </recommendedName>
    <alternativeName>
        <fullName evidence="7">ARFGEF family member 3</fullName>
    </alternativeName>
</protein>
<evidence type="ECO:0000250" key="1">
    <source>
        <dbReference type="UniProtKB" id="Q3UGY8"/>
    </source>
</evidence>
<evidence type="ECO:0000255" key="2"/>
<evidence type="ECO:0000256" key="3">
    <source>
        <dbReference type="SAM" id="MobiDB-lite"/>
    </source>
</evidence>
<evidence type="ECO:0000269" key="4">
    <source>
    </source>
</evidence>
<evidence type="ECO:0000305" key="5"/>
<evidence type="ECO:0000312" key="6">
    <source>
        <dbReference type="EMBL" id="BAH83562.1"/>
    </source>
</evidence>
<evidence type="ECO:0000312" key="7">
    <source>
        <dbReference type="HGNC" id="HGNC:21213"/>
    </source>
</evidence>
<evidence type="ECO:0007744" key="8">
    <source>
    </source>
</evidence>
<gene>
    <name evidence="7" type="primary">ARFGEF3</name>
    <name type="synonym">BIG3</name>
    <name type="synonym">C6orf92</name>
    <name type="synonym">KIAA1244</name>
</gene>